<keyword id="KW-0119">Carbohydrate metabolism</keyword>
<keyword id="KW-0150">Chloroplast</keyword>
<keyword id="KW-1015">Disulfide bond</keyword>
<keyword id="KW-0313">Glucose metabolism</keyword>
<keyword id="KW-0521">NADP</keyword>
<keyword id="KW-0560">Oxidoreductase</keyword>
<keyword id="KW-0934">Plastid</keyword>
<keyword id="KW-1185">Reference proteome</keyword>
<keyword id="KW-0809">Transit peptide</keyword>
<sequence length="593" mass="67369">MVTLYSSPSTHSSGPVASYSNSSIGLYNYHHNKQIAVSSILSRKFGSLQINQKPFWNAVRMQDGAVATPPSKIENETPLKKLKNGILPVAPPKEQKDTIDFDSNKAKSTVSITVVGASGDLAKKKIFPALFALYYEGCLPEHFTIFGYARSKMTDAELRNMVSKTLTCRIDKRENCGEKMEQFLERCFYHSGQYDSLENFAELDKKLKEHEAGRFSNRLFYLSIPPNIFINAVRCASLSASSAHGWTRVIVEKPFGRDSESSAALTRSLKQYLNEDQIFRIDHYLGKELVENLSVLRFSNLIFEPLWSRQCIRNVQFIFSEDFGTEGRGGYFDHYGIIRDIMQNHLLQILALFAMETPVSLDAEDIRNEKVKVLRSMRPLQLDDVIIGQYKCHTKGDVTYPGYTDDKTVPKDSLTPTFAAAALFIDNARWDGVPFLMKAGKALHTRSAEIRVQFRHVPGNLYNKNFGSDLDQATNELVIRVQPNEAIYLKINNKVPGLGMRLDRSNLNLLYSARYSKEIPDAYERLLLDAIEGERRLFIRSDELDAAWSLFTPVLKELEDKKIVPEYYPYGSRGPIGAHYLAARYKVRWGDLV</sequence>
<accession>Q43793</accession>
<organism>
    <name type="scientific">Nicotiana tabacum</name>
    <name type="common">Common tobacco</name>
    <dbReference type="NCBI Taxonomy" id="4097"/>
    <lineage>
        <taxon>Eukaryota</taxon>
        <taxon>Viridiplantae</taxon>
        <taxon>Streptophyta</taxon>
        <taxon>Embryophyta</taxon>
        <taxon>Tracheophyta</taxon>
        <taxon>Spermatophyta</taxon>
        <taxon>Magnoliopsida</taxon>
        <taxon>eudicotyledons</taxon>
        <taxon>Gunneridae</taxon>
        <taxon>Pentapetalae</taxon>
        <taxon>asterids</taxon>
        <taxon>lamiids</taxon>
        <taxon>Solanales</taxon>
        <taxon>Solanaceae</taxon>
        <taxon>Nicotianoideae</taxon>
        <taxon>Nicotianeae</taxon>
        <taxon>Nicotiana</taxon>
    </lineage>
</organism>
<proteinExistence type="evidence at transcript level"/>
<feature type="transit peptide" description="Chloroplast" evidence="5">
    <location>
        <begin position="1"/>
        <end status="unknown"/>
    </location>
</feature>
<feature type="chain" id="PRO_0000010441" description="Glucose-6-phosphate 1-dehydrogenase, chloroplastic">
    <location>
        <begin status="unknown"/>
        <end position="593"/>
    </location>
</feature>
<feature type="active site" description="Proton acceptor" evidence="1">
    <location>
        <position position="345"/>
    </location>
</feature>
<feature type="binding site" evidence="2">
    <location>
        <begin position="116"/>
        <end position="123"/>
    </location>
    <ligand>
        <name>NADP(+)</name>
        <dbReference type="ChEBI" id="CHEBI:58349"/>
        <label>1</label>
    </ligand>
</feature>
<feature type="binding site" evidence="2">
    <location>
        <position position="150"/>
    </location>
    <ligand>
        <name>NADP(+)</name>
        <dbReference type="ChEBI" id="CHEBI:58349"/>
        <label>1</label>
    </ligand>
</feature>
<feature type="binding site" evidence="2">
    <location>
        <position position="253"/>
    </location>
    <ligand>
        <name>D-glucose 6-phosphate</name>
        <dbReference type="ChEBI" id="CHEBI:61548"/>
    </ligand>
</feature>
<feature type="binding site" evidence="2">
    <location>
        <position position="253"/>
    </location>
    <ligand>
        <name>NADP(+)</name>
        <dbReference type="ChEBI" id="CHEBI:58349"/>
        <label>1</label>
    </ligand>
</feature>
<feature type="binding site" evidence="2">
    <location>
        <begin position="283"/>
        <end position="287"/>
    </location>
    <ligand>
        <name>D-glucose 6-phosphate</name>
        <dbReference type="ChEBI" id="CHEBI:61548"/>
    </ligand>
</feature>
<feature type="binding site" evidence="2">
    <location>
        <position position="321"/>
    </location>
    <ligand>
        <name>D-glucose 6-phosphate</name>
        <dbReference type="ChEBI" id="CHEBI:61548"/>
    </ligand>
</feature>
<feature type="binding site" evidence="2">
    <location>
        <position position="340"/>
    </location>
    <ligand>
        <name>D-glucose 6-phosphate</name>
        <dbReference type="ChEBI" id="CHEBI:61548"/>
    </ligand>
</feature>
<feature type="binding site" evidence="2">
    <location>
        <position position="438"/>
    </location>
    <ligand>
        <name>NADP(+)</name>
        <dbReference type="ChEBI" id="CHEBI:58349"/>
        <label>2</label>
    </ligand>
</feature>
<feature type="binding site" evidence="2">
    <location>
        <position position="441"/>
    </location>
    <ligand>
        <name>D-glucose 6-phosphate</name>
        <dbReference type="ChEBI" id="CHEBI:61548"/>
    </ligand>
</feature>
<feature type="binding site" evidence="2">
    <location>
        <position position="446"/>
    </location>
    <ligand>
        <name>D-glucose 6-phosphate</name>
        <dbReference type="ChEBI" id="CHEBI:61548"/>
    </ligand>
</feature>
<feature type="binding site" evidence="2">
    <location>
        <position position="451"/>
    </location>
    <ligand>
        <name>NADP(+)</name>
        <dbReference type="ChEBI" id="CHEBI:58349"/>
        <label>2</label>
    </ligand>
</feature>
<feature type="binding site" evidence="2">
    <location>
        <position position="480"/>
    </location>
    <ligand>
        <name>NADP(+)</name>
        <dbReference type="ChEBI" id="CHEBI:58349"/>
        <label>2</label>
    </ligand>
</feature>
<feature type="binding site" evidence="2">
    <location>
        <position position="482"/>
    </location>
    <ligand>
        <name>D-glucose 6-phosphate</name>
        <dbReference type="ChEBI" id="CHEBI:61548"/>
    </ligand>
</feature>
<feature type="binding site" evidence="2">
    <location>
        <begin position="488"/>
        <end position="490"/>
    </location>
    <ligand>
        <name>NADP(+)</name>
        <dbReference type="ChEBI" id="CHEBI:58349"/>
        <label>2</label>
    </ligand>
</feature>
<feature type="binding site" evidence="2">
    <location>
        <position position="573"/>
    </location>
    <ligand>
        <name>NADP(+)</name>
        <dbReference type="ChEBI" id="CHEBI:58349"/>
        <label>2</label>
    </ligand>
</feature>
<feature type="disulfide bond" description="Redox modulation" evidence="4">
    <location>
        <begin position="168"/>
        <end position="176"/>
    </location>
</feature>
<name>G6PDC_TOBAC</name>
<protein>
    <recommendedName>
        <fullName>Glucose-6-phosphate 1-dehydrogenase, chloroplastic</fullName>
        <shortName>G6PD</shortName>
        <ecNumber evidence="3">1.1.1.49</ecNumber>
    </recommendedName>
</protein>
<dbReference type="EC" id="1.1.1.49" evidence="3"/>
<dbReference type="EMBL" id="X99405">
    <property type="protein sequence ID" value="CAA67782.1"/>
    <property type="molecule type" value="mRNA"/>
</dbReference>
<dbReference type="PIR" id="T03244">
    <property type="entry name" value="T03244"/>
</dbReference>
<dbReference type="RefSeq" id="NP_001313142.1">
    <property type="nucleotide sequence ID" value="NM_001326213.1"/>
</dbReference>
<dbReference type="SMR" id="Q43793"/>
<dbReference type="STRING" id="4097.Q43793"/>
<dbReference type="PaxDb" id="4097-Q43793"/>
<dbReference type="GeneID" id="107828938"/>
<dbReference type="KEGG" id="nta:107828938"/>
<dbReference type="OrthoDB" id="60984at2759"/>
<dbReference type="UniPathway" id="UPA00115">
    <property type="reaction ID" value="UER00408"/>
</dbReference>
<dbReference type="Proteomes" id="UP000084051">
    <property type="component" value="Unplaced"/>
</dbReference>
<dbReference type="GO" id="GO:0009507">
    <property type="term" value="C:chloroplast"/>
    <property type="evidence" value="ECO:0007669"/>
    <property type="project" value="UniProtKB-SubCell"/>
</dbReference>
<dbReference type="GO" id="GO:0004345">
    <property type="term" value="F:glucose-6-phosphate dehydrogenase activity"/>
    <property type="evidence" value="ECO:0000318"/>
    <property type="project" value="GO_Central"/>
</dbReference>
<dbReference type="GO" id="GO:0050661">
    <property type="term" value="F:NADP binding"/>
    <property type="evidence" value="ECO:0007669"/>
    <property type="project" value="InterPro"/>
</dbReference>
<dbReference type="GO" id="GO:0006006">
    <property type="term" value="P:glucose metabolic process"/>
    <property type="evidence" value="ECO:0000318"/>
    <property type="project" value="GO_Central"/>
</dbReference>
<dbReference type="GO" id="GO:0009051">
    <property type="term" value="P:pentose-phosphate shunt, oxidative branch"/>
    <property type="evidence" value="ECO:0000318"/>
    <property type="project" value="GO_Central"/>
</dbReference>
<dbReference type="FunFam" id="3.30.360.10:FF:000018">
    <property type="entry name" value="Glucose-6-phosphate 1-dehydrogenase"/>
    <property type="match status" value="1"/>
</dbReference>
<dbReference type="FunFam" id="3.40.50.720:FF:000222">
    <property type="entry name" value="Glucose-6-phosphate 1-dehydrogenase"/>
    <property type="match status" value="1"/>
</dbReference>
<dbReference type="Gene3D" id="3.30.360.10">
    <property type="entry name" value="Dihydrodipicolinate Reductase, domain 2"/>
    <property type="match status" value="1"/>
</dbReference>
<dbReference type="Gene3D" id="3.40.50.720">
    <property type="entry name" value="NAD(P)-binding Rossmann-like Domain"/>
    <property type="match status" value="1"/>
</dbReference>
<dbReference type="HAMAP" id="MF_00966">
    <property type="entry name" value="G6PD"/>
    <property type="match status" value="1"/>
</dbReference>
<dbReference type="InterPro" id="IPR001282">
    <property type="entry name" value="G6P_DH"/>
</dbReference>
<dbReference type="InterPro" id="IPR019796">
    <property type="entry name" value="G6P_DH_AS"/>
</dbReference>
<dbReference type="InterPro" id="IPR022675">
    <property type="entry name" value="G6P_DH_C"/>
</dbReference>
<dbReference type="InterPro" id="IPR022674">
    <property type="entry name" value="G6P_DH_NAD-bd"/>
</dbReference>
<dbReference type="InterPro" id="IPR036291">
    <property type="entry name" value="NAD(P)-bd_dom_sf"/>
</dbReference>
<dbReference type="NCBIfam" id="TIGR00871">
    <property type="entry name" value="zwf"/>
    <property type="match status" value="1"/>
</dbReference>
<dbReference type="PANTHER" id="PTHR23429:SF11">
    <property type="entry name" value="GLUCOSE-6-PHOSPHATE 1-DEHYDROGENASE 2, CHLOROPLASTIC"/>
    <property type="match status" value="1"/>
</dbReference>
<dbReference type="PANTHER" id="PTHR23429">
    <property type="entry name" value="GLUCOSE-6-PHOSPHATE 1-DEHYDROGENASE G6PD"/>
    <property type="match status" value="1"/>
</dbReference>
<dbReference type="Pfam" id="PF02781">
    <property type="entry name" value="G6PD_C"/>
    <property type="match status" value="1"/>
</dbReference>
<dbReference type="Pfam" id="PF00479">
    <property type="entry name" value="G6PD_N"/>
    <property type="match status" value="1"/>
</dbReference>
<dbReference type="PRINTS" id="PR00079">
    <property type="entry name" value="G6PDHDRGNASE"/>
</dbReference>
<dbReference type="SUPFAM" id="SSF55347">
    <property type="entry name" value="Glyceraldehyde-3-phosphate dehydrogenase-like, C-terminal domain"/>
    <property type="match status" value="1"/>
</dbReference>
<dbReference type="SUPFAM" id="SSF51735">
    <property type="entry name" value="NAD(P)-binding Rossmann-fold domains"/>
    <property type="match status" value="1"/>
</dbReference>
<dbReference type="PROSITE" id="PS00069">
    <property type="entry name" value="G6P_DEHYDROGENASE"/>
    <property type="match status" value="1"/>
</dbReference>
<reference key="1">
    <citation type="online journal article" date="1996" name="Plant Gene Register">
        <title>Isolation of a tobacco chloroplast glucose-6-phosphate dehydrogenase cDNA.</title>
        <authorList>
            <person name="Knight J.S."/>
            <person name="Emes M.J."/>
        </authorList>
        <locator>PGR96-076</locator>
    </citation>
    <scope>NUCLEOTIDE SEQUENCE [MRNA]</scope>
    <source>
        <strain>cv. Samsun</strain>
        <tissue>Leaf</tissue>
    </source>
</reference>
<comment type="function">
    <text evidence="3">Catalyzes the rate-limiting step of the oxidative pentose-phosphate pathway, which represents a route for the dissimilation of carbohydrates besides glycolysis. The main function of this enzyme is to provide reducing power (NADPH) and pentose phosphates for fatty acid and nucleic acid synthesis which are involved in membrane synthesis and cell division (By similarity).</text>
</comment>
<comment type="catalytic activity">
    <reaction evidence="3">
        <text>D-glucose 6-phosphate + NADP(+) = 6-phospho-D-glucono-1,5-lactone + NADPH + H(+)</text>
        <dbReference type="Rhea" id="RHEA:15841"/>
        <dbReference type="ChEBI" id="CHEBI:15378"/>
        <dbReference type="ChEBI" id="CHEBI:57783"/>
        <dbReference type="ChEBI" id="CHEBI:57955"/>
        <dbReference type="ChEBI" id="CHEBI:58349"/>
        <dbReference type="ChEBI" id="CHEBI:61548"/>
        <dbReference type="EC" id="1.1.1.49"/>
    </reaction>
</comment>
<comment type="activity regulation">
    <text evidence="4">Regulated by metabolites. Post-translationally inactivated by cysteine-mediated redox modification via the ferredoxin-thioredoxin system in the light and this avoids futile cycles with photosynthetic CO2 fixation (By similarity).</text>
</comment>
<comment type="pathway">
    <text evidence="6">Carbohydrate degradation; pentose phosphate pathway; D-ribulose 5-phosphate from D-glucose 6-phosphate (oxidative stage): step 1/3.</text>
</comment>
<comment type="subunit">
    <text evidence="1">Homodimer.</text>
</comment>
<comment type="subcellular location">
    <subcellularLocation>
        <location>Plastid</location>
        <location>Chloroplast</location>
    </subcellularLocation>
</comment>
<comment type="similarity">
    <text evidence="6">Belongs to the glucose-6-phosphate dehydrogenase family.</text>
</comment>
<evidence type="ECO:0000250" key="1">
    <source>
        <dbReference type="UniProtKB" id="P11411"/>
    </source>
</evidence>
<evidence type="ECO:0000250" key="2">
    <source>
        <dbReference type="UniProtKB" id="P11413"/>
    </source>
</evidence>
<evidence type="ECO:0000250" key="3">
    <source>
        <dbReference type="UniProtKB" id="Q43727"/>
    </source>
</evidence>
<evidence type="ECO:0000250" key="4">
    <source>
        <dbReference type="UniProtKB" id="Q43839"/>
    </source>
</evidence>
<evidence type="ECO:0000255" key="5"/>
<evidence type="ECO:0000305" key="6"/>